<gene>
    <name evidence="4" type="primary">zntB</name>
    <name evidence="6" type="ordered locus">VP2389</name>
</gene>
<sequence>MGFMIEHWDFSTPMATQETTTAEHIQPNHWYHCERLHPDIRSWLEDNHVPRATVDHLLADESRPSFHPLDDDNFMLILRGINMNENASPEDMLSIRILYFQGALISTRKIPSRAIMEIRQALAEHKGPKSLASLLNQIIEGLNGKIDLYLDTIEETLNEFDVNDESTYNHIAAQKALISIKRFIRPQQYAIRDLIESESELVTSRPHQYRFAHNNITRINETIEFYLGEVALFQDEIKHNRDEKTNKNSYLFTLVATIFLPTSFLTGLLGINIGGMPGVESSMAFTWFCIALIVIFGLEWLLFKRLGFTNKTDDE</sequence>
<proteinExistence type="evidence at protein level"/>
<dbReference type="EMBL" id="BA000031">
    <property type="protein sequence ID" value="BAC60652.1"/>
    <property type="molecule type" value="Genomic_DNA"/>
</dbReference>
<dbReference type="RefSeq" id="NP_798768.1">
    <property type="nucleotide sequence ID" value="NC_004603.1"/>
</dbReference>
<dbReference type="RefSeq" id="WP_005456583.1">
    <property type="nucleotide sequence ID" value="NC_004603.1"/>
</dbReference>
<dbReference type="PDB" id="3CK6">
    <property type="method" value="X-ray"/>
    <property type="resolution" value="1.90 A"/>
    <property type="chains" value="A/B/C/D/E=1-249"/>
</dbReference>
<dbReference type="PDBsum" id="3CK6"/>
<dbReference type="SMR" id="Q87M69"/>
<dbReference type="TCDB" id="1.A.35.4.2">
    <property type="family name" value="the cora metal ion transporter (mit) family"/>
</dbReference>
<dbReference type="GeneID" id="1189902"/>
<dbReference type="KEGG" id="vpa:VP2389"/>
<dbReference type="PATRIC" id="fig|223926.6.peg.2291"/>
<dbReference type="eggNOG" id="COG0598">
    <property type="taxonomic scope" value="Bacteria"/>
</dbReference>
<dbReference type="HOGENOM" id="CLU_007127_2_0_6"/>
<dbReference type="EvolutionaryTrace" id="Q87M69"/>
<dbReference type="Proteomes" id="UP000002493">
    <property type="component" value="Chromosome 1"/>
</dbReference>
<dbReference type="GO" id="GO:0005886">
    <property type="term" value="C:plasma membrane"/>
    <property type="evidence" value="ECO:0007669"/>
    <property type="project" value="UniProtKB-SubCell"/>
</dbReference>
<dbReference type="GO" id="GO:0050897">
    <property type="term" value="F:cobalt ion binding"/>
    <property type="evidence" value="ECO:0007669"/>
    <property type="project" value="TreeGrafter"/>
</dbReference>
<dbReference type="GO" id="GO:0015087">
    <property type="term" value="F:cobalt ion transmembrane transporter activity"/>
    <property type="evidence" value="ECO:0007669"/>
    <property type="project" value="TreeGrafter"/>
</dbReference>
<dbReference type="GO" id="GO:0000287">
    <property type="term" value="F:magnesium ion binding"/>
    <property type="evidence" value="ECO:0007669"/>
    <property type="project" value="TreeGrafter"/>
</dbReference>
<dbReference type="GO" id="GO:0015095">
    <property type="term" value="F:magnesium ion transmembrane transporter activity"/>
    <property type="evidence" value="ECO:0007669"/>
    <property type="project" value="TreeGrafter"/>
</dbReference>
<dbReference type="CDD" id="cd12824">
    <property type="entry name" value="ZntB-like"/>
    <property type="match status" value="1"/>
</dbReference>
<dbReference type="Gene3D" id="3.30.460.20">
    <property type="entry name" value="CorA soluble domain-like"/>
    <property type="match status" value="1"/>
</dbReference>
<dbReference type="Gene3D" id="1.20.58.340">
    <property type="entry name" value="Magnesium transport protein CorA, transmembrane region"/>
    <property type="match status" value="2"/>
</dbReference>
<dbReference type="InterPro" id="IPR045861">
    <property type="entry name" value="CorA_cytoplasmic_dom"/>
</dbReference>
<dbReference type="InterPro" id="IPR045863">
    <property type="entry name" value="CorA_TM1_TM2"/>
</dbReference>
<dbReference type="InterPro" id="IPR002523">
    <property type="entry name" value="MgTranspt_CorA/ZnTranspt_ZntB"/>
</dbReference>
<dbReference type="PANTHER" id="PTHR46494">
    <property type="entry name" value="CORA FAMILY METAL ION TRANSPORTER (EUROFUNG)"/>
    <property type="match status" value="1"/>
</dbReference>
<dbReference type="PANTHER" id="PTHR46494:SF3">
    <property type="entry name" value="ZINC TRANSPORT PROTEIN ZNTB"/>
    <property type="match status" value="1"/>
</dbReference>
<dbReference type="Pfam" id="PF01544">
    <property type="entry name" value="CorA"/>
    <property type="match status" value="1"/>
</dbReference>
<dbReference type="SUPFAM" id="SSF143865">
    <property type="entry name" value="CorA soluble domain-like"/>
    <property type="match status" value="1"/>
</dbReference>
<dbReference type="SUPFAM" id="SSF144083">
    <property type="entry name" value="Magnesium transport protein CorA, transmembrane region"/>
    <property type="match status" value="1"/>
</dbReference>
<protein>
    <recommendedName>
        <fullName evidence="5">Zinc transport protein ZntB</fullName>
    </recommendedName>
</protein>
<keyword id="KW-0002">3D-structure</keyword>
<keyword id="KW-0997">Cell inner membrane</keyword>
<keyword id="KW-1003">Cell membrane</keyword>
<keyword id="KW-0406">Ion transport</keyword>
<keyword id="KW-0472">Membrane</keyword>
<keyword id="KW-0812">Transmembrane</keyword>
<keyword id="KW-1133">Transmembrane helix</keyword>
<keyword id="KW-0813">Transport</keyword>
<keyword id="KW-0862">Zinc</keyword>
<reference key="1">
    <citation type="journal article" date="2003" name="Lancet">
        <title>Genome sequence of Vibrio parahaemolyticus: a pathogenic mechanism distinct from that of V. cholerae.</title>
        <authorList>
            <person name="Makino K."/>
            <person name="Oshima K."/>
            <person name="Kurokawa K."/>
            <person name="Yokoyama K."/>
            <person name="Uda T."/>
            <person name="Tagomori K."/>
            <person name="Iijima Y."/>
            <person name="Najima M."/>
            <person name="Nakano M."/>
            <person name="Yamashita A."/>
            <person name="Kubota Y."/>
            <person name="Kimura S."/>
            <person name="Yasunaga T."/>
            <person name="Honda T."/>
            <person name="Shinagawa H."/>
            <person name="Hattori M."/>
            <person name="Iida T."/>
        </authorList>
    </citation>
    <scope>NUCLEOTIDE SEQUENCE [LARGE SCALE GENOMIC DNA]</scope>
    <source>
        <strain>RIMD 2210633</strain>
    </source>
</reference>
<reference evidence="7" key="2">
    <citation type="journal article" date="2009" name="Protein Sci.">
        <title>Structure and electrostatic property of cytoplasmic domain of ZntB transporter.</title>
        <authorList>
            <person name="Tan K."/>
            <person name="Sather A."/>
            <person name="Robertson J.L."/>
            <person name="Moy S."/>
            <person name="Roux B."/>
            <person name="Joachimiak A."/>
        </authorList>
    </citation>
    <scope>X-RAY CRYSTALLOGRAPHY (1.90 ANGSTROMS) OF 1-249 IN COMPLEX WITH CHLORIDE IONS</scope>
    <scope>SUBUNIT</scope>
    <scope>DOMAIN</scope>
    <source>
        <strain>RIMD 2210633</strain>
    </source>
</reference>
<name>ZNTB_VIBPA</name>
<accession>Q87M69</accession>
<evidence type="ECO:0000250" key="1">
    <source>
        <dbReference type="UniProtKB" id="P64423"/>
    </source>
</evidence>
<evidence type="ECO:0000255" key="2"/>
<evidence type="ECO:0000269" key="3">
    <source>
    </source>
</evidence>
<evidence type="ECO:0000303" key="4">
    <source>
    </source>
</evidence>
<evidence type="ECO:0000305" key="5"/>
<evidence type="ECO:0000312" key="6">
    <source>
        <dbReference type="EMBL" id="BAC60652.1"/>
    </source>
</evidence>
<evidence type="ECO:0007744" key="7">
    <source>
        <dbReference type="PDB" id="3CK6"/>
    </source>
</evidence>
<evidence type="ECO:0007829" key="8">
    <source>
        <dbReference type="PDB" id="3CK6"/>
    </source>
</evidence>
<organism>
    <name type="scientific">Vibrio parahaemolyticus serotype O3:K6 (strain RIMD 2210633)</name>
    <dbReference type="NCBI Taxonomy" id="223926"/>
    <lineage>
        <taxon>Bacteria</taxon>
        <taxon>Pseudomonadati</taxon>
        <taxon>Pseudomonadota</taxon>
        <taxon>Gammaproteobacteria</taxon>
        <taxon>Vibrionales</taxon>
        <taxon>Vibrionaceae</taxon>
        <taxon>Vibrio</taxon>
    </lineage>
</organism>
<comment type="function">
    <text evidence="1">Zinc transporter. Acts as a Zn(2+):proton symporter, which likely mediates zinc ion uptake.</text>
</comment>
<comment type="catalytic activity">
    <reaction evidence="1">
        <text>Zn(2+)(out) + H(+)(out) = Zn(2+)(in) + H(+)(in)</text>
        <dbReference type="Rhea" id="RHEA:71195"/>
        <dbReference type="ChEBI" id="CHEBI:15378"/>
        <dbReference type="ChEBI" id="CHEBI:29105"/>
    </reaction>
    <physiologicalReaction direction="left-to-right" evidence="1">
        <dbReference type="Rhea" id="RHEA:71196"/>
    </physiologicalReaction>
</comment>
<comment type="subunit">
    <text evidence="3">Homopentamer (PubMed:19653298). Can assemble pentamers in the absence of the transmembrane regions (PubMed:19653298).</text>
</comment>
<comment type="subcellular location">
    <subcellularLocation>
        <location evidence="1">Cell inner membrane</location>
        <topology evidence="2">Multi-pass membrane protein</topology>
    </subcellularLocation>
</comment>
<comment type="domain">
    <text evidence="3">The intracellular cytoplasmic domain forms a funnel-shaped homopentamer. 25 well-defined Cl(-) ions were observed and some of these binding sites are highly conserved within the ZntB family. The presence of the bound Cl(-) ions increases the stability of cations along the pore suggesting they could be important in enhancing cation transport.</text>
</comment>
<comment type="similarity">
    <text evidence="5">Belongs to the CorA metal ion transporter (MIT) (TC 1.A.35) family.</text>
</comment>
<feature type="chain" id="PRO_0000455826" description="Zinc transport protein ZntB">
    <location>
        <begin position="1"/>
        <end position="315"/>
    </location>
</feature>
<feature type="topological domain" description="Cytoplasmic" evidence="5">
    <location>
        <begin position="1"/>
        <end position="250"/>
    </location>
</feature>
<feature type="transmembrane region" description="Helical" evidence="2">
    <location>
        <begin position="251"/>
        <end position="271"/>
    </location>
</feature>
<feature type="topological domain" description="Periplasmic" evidence="5">
    <location>
        <begin position="272"/>
        <end position="282"/>
    </location>
</feature>
<feature type="transmembrane region" description="Helical" evidence="2">
    <location>
        <begin position="283"/>
        <end position="303"/>
    </location>
</feature>
<feature type="topological domain" description="Cytoplasmic" evidence="5">
    <location>
        <begin position="304"/>
        <end position="315"/>
    </location>
</feature>
<feature type="strand" evidence="8">
    <location>
        <begin position="4"/>
        <end position="9"/>
    </location>
</feature>
<feature type="strand" evidence="8">
    <location>
        <begin position="11"/>
        <end position="14"/>
    </location>
</feature>
<feature type="strand" evidence="8">
    <location>
        <begin position="29"/>
        <end position="34"/>
    </location>
</feature>
<feature type="helix" evidence="8">
    <location>
        <begin position="40"/>
        <end position="46"/>
    </location>
</feature>
<feature type="helix" evidence="8">
    <location>
        <begin position="51"/>
        <end position="58"/>
    </location>
</feature>
<feature type="strand" evidence="8">
    <location>
        <begin position="65"/>
        <end position="68"/>
    </location>
</feature>
<feature type="strand" evidence="8">
    <location>
        <begin position="74"/>
        <end position="80"/>
    </location>
</feature>
<feature type="strand" evidence="8">
    <location>
        <begin position="93"/>
        <end position="100"/>
    </location>
</feature>
<feature type="strand" evidence="8">
    <location>
        <begin position="103"/>
        <end position="110"/>
    </location>
</feature>
<feature type="helix" evidence="8">
    <location>
        <begin position="113"/>
        <end position="123"/>
    </location>
</feature>
<feature type="helix" evidence="8">
    <location>
        <begin position="131"/>
        <end position="158"/>
    </location>
</feature>
<feature type="helix" evidence="8">
    <location>
        <begin position="165"/>
        <end position="167"/>
    </location>
</feature>
<feature type="helix" evidence="8">
    <location>
        <begin position="170"/>
        <end position="196"/>
    </location>
</feature>
<feature type="helix" evidence="8">
    <location>
        <begin position="200"/>
        <end position="203"/>
    </location>
</feature>
<feature type="helix" evidence="8">
    <location>
        <begin position="206"/>
        <end position="243"/>
    </location>
</feature>